<sequence length="299" mass="33456">MLDKTRLRIAMQKSGRLSDESQELLSRCGIKINLQQQRLIAFAENMPIDILRVRDDDIPGLVMDGVVDLGIIGENVLEEELLNRRAQGDDPRYFTLRRLDFGGCRLSLAAPLDAEYTGPQCLQDTRIATSYPHILKQYLDKQGVRFKSCLLNGSVEVAPRAGLADAICDLVSTGATLEANGLREVEVIYRSKACLIQRDGEMSVDKQQLIDRLMTRIQGVIQARESKYIMMHAPSERLDEIITLLPGAERPTILPLAGDKSRVAMHMVSSETLFWETMEKLKALGASSILVLPIEKMME</sequence>
<keyword id="KW-0028">Amino-acid biosynthesis</keyword>
<keyword id="KW-0067">ATP-binding</keyword>
<keyword id="KW-0963">Cytoplasm</keyword>
<keyword id="KW-0328">Glycosyltransferase</keyword>
<keyword id="KW-0368">Histidine biosynthesis</keyword>
<keyword id="KW-0460">Magnesium</keyword>
<keyword id="KW-0479">Metal-binding</keyword>
<keyword id="KW-0547">Nucleotide-binding</keyword>
<keyword id="KW-0808">Transferase</keyword>
<proteinExistence type="inferred from homology"/>
<reference key="1">
    <citation type="journal article" date="2006" name="J. Bacteriol.">
        <title>Complete genome sequence of Yersinia pestis strains Antiqua and Nepal516: evidence of gene reduction in an emerging pathogen.</title>
        <authorList>
            <person name="Chain P.S.G."/>
            <person name="Hu P."/>
            <person name="Malfatti S.A."/>
            <person name="Radnedge L."/>
            <person name="Larimer F."/>
            <person name="Vergez L.M."/>
            <person name="Worsham P."/>
            <person name="Chu M.C."/>
            <person name="Andersen G.L."/>
        </authorList>
    </citation>
    <scope>NUCLEOTIDE SEQUENCE [LARGE SCALE GENOMIC DNA]</scope>
    <source>
        <strain>Antiqua</strain>
    </source>
</reference>
<protein>
    <recommendedName>
        <fullName evidence="1">ATP phosphoribosyltransferase</fullName>
        <shortName evidence="1">ATP-PRT</shortName>
        <shortName evidence="1">ATP-PRTase</shortName>
        <ecNumber evidence="1">2.4.2.17</ecNumber>
    </recommendedName>
</protein>
<accession>Q1C9Q9</accession>
<dbReference type="EC" id="2.4.2.17" evidence="1"/>
<dbReference type="EMBL" id="CP000308">
    <property type="protein sequence ID" value="ABG12813.1"/>
    <property type="molecule type" value="Genomic_DNA"/>
</dbReference>
<dbReference type="RefSeq" id="WP_002211896.1">
    <property type="nucleotide sequence ID" value="NZ_CP009906.1"/>
</dbReference>
<dbReference type="SMR" id="Q1C9Q9"/>
<dbReference type="GeneID" id="96665168"/>
<dbReference type="KEGG" id="ypa:YPA_0845"/>
<dbReference type="UniPathway" id="UPA00031">
    <property type="reaction ID" value="UER00006"/>
</dbReference>
<dbReference type="Proteomes" id="UP000001971">
    <property type="component" value="Chromosome"/>
</dbReference>
<dbReference type="GO" id="GO:0005737">
    <property type="term" value="C:cytoplasm"/>
    <property type="evidence" value="ECO:0007669"/>
    <property type="project" value="UniProtKB-SubCell"/>
</dbReference>
<dbReference type="GO" id="GO:0005524">
    <property type="term" value="F:ATP binding"/>
    <property type="evidence" value="ECO:0007669"/>
    <property type="project" value="UniProtKB-KW"/>
</dbReference>
<dbReference type="GO" id="GO:0003879">
    <property type="term" value="F:ATP phosphoribosyltransferase activity"/>
    <property type="evidence" value="ECO:0007669"/>
    <property type="project" value="UniProtKB-UniRule"/>
</dbReference>
<dbReference type="GO" id="GO:0000287">
    <property type="term" value="F:magnesium ion binding"/>
    <property type="evidence" value="ECO:0007669"/>
    <property type="project" value="UniProtKB-UniRule"/>
</dbReference>
<dbReference type="GO" id="GO:0000105">
    <property type="term" value="P:L-histidine biosynthetic process"/>
    <property type="evidence" value="ECO:0007669"/>
    <property type="project" value="UniProtKB-UniRule"/>
</dbReference>
<dbReference type="CDD" id="cd13592">
    <property type="entry name" value="PBP2_HisGL2"/>
    <property type="match status" value="1"/>
</dbReference>
<dbReference type="FunFam" id="3.30.70.120:FF:000002">
    <property type="entry name" value="ATP phosphoribosyltransferase"/>
    <property type="match status" value="1"/>
</dbReference>
<dbReference type="FunFam" id="3.40.190.10:FF:000008">
    <property type="entry name" value="ATP phosphoribosyltransferase"/>
    <property type="match status" value="1"/>
</dbReference>
<dbReference type="Gene3D" id="3.30.70.120">
    <property type="match status" value="1"/>
</dbReference>
<dbReference type="Gene3D" id="3.40.190.10">
    <property type="entry name" value="Periplasmic binding protein-like II"/>
    <property type="match status" value="2"/>
</dbReference>
<dbReference type="HAMAP" id="MF_00079">
    <property type="entry name" value="HisG_Long"/>
    <property type="match status" value="1"/>
</dbReference>
<dbReference type="InterPro" id="IPR020621">
    <property type="entry name" value="ATP-PRT_HisG_long"/>
</dbReference>
<dbReference type="InterPro" id="IPR013820">
    <property type="entry name" value="ATP_PRibTrfase_cat"/>
</dbReference>
<dbReference type="InterPro" id="IPR018198">
    <property type="entry name" value="ATP_PRibTrfase_CS"/>
</dbReference>
<dbReference type="InterPro" id="IPR001348">
    <property type="entry name" value="ATP_PRibTrfase_HisG"/>
</dbReference>
<dbReference type="InterPro" id="IPR013115">
    <property type="entry name" value="HisG_C"/>
</dbReference>
<dbReference type="InterPro" id="IPR011322">
    <property type="entry name" value="N-reg_PII-like_a/b"/>
</dbReference>
<dbReference type="InterPro" id="IPR015867">
    <property type="entry name" value="N-reg_PII/ATP_PRibTrfase_C"/>
</dbReference>
<dbReference type="NCBIfam" id="TIGR00070">
    <property type="entry name" value="hisG"/>
    <property type="match status" value="1"/>
</dbReference>
<dbReference type="NCBIfam" id="TIGR03455">
    <property type="entry name" value="HisG_C-term"/>
    <property type="match status" value="1"/>
</dbReference>
<dbReference type="PANTHER" id="PTHR21403:SF8">
    <property type="entry name" value="ATP PHOSPHORIBOSYLTRANSFERASE"/>
    <property type="match status" value="1"/>
</dbReference>
<dbReference type="PANTHER" id="PTHR21403">
    <property type="entry name" value="ATP PHOSPHORIBOSYLTRANSFERASE ATP-PRTASE"/>
    <property type="match status" value="1"/>
</dbReference>
<dbReference type="Pfam" id="PF01634">
    <property type="entry name" value="HisG"/>
    <property type="match status" value="1"/>
</dbReference>
<dbReference type="Pfam" id="PF08029">
    <property type="entry name" value="HisG_C"/>
    <property type="match status" value="1"/>
</dbReference>
<dbReference type="SUPFAM" id="SSF54913">
    <property type="entry name" value="GlnB-like"/>
    <property type="match status" value="1"/>
</dbReference>
<dbReference type="SUPFAM" id="SSF53850">
    <property type="entry name" value="Periplasmic binding protein-like II"/>
    <property type="match status" value="1"/>
</dbReference>
<dbReference type="PROSITE" id="PS01316">
    <property type="entry name" value="ATP_P_PHORIBOSYLTR"/>
    <property type="match status" value="1"/>
</dbReference>
<evidence type="ECO:0000255" key="1">
    <source>
        <dbReference type="HAMAP-Rule" id="MF_00079"/>
    </source>
</evidence>
<comment type="function">
    <text evidence="1">Catalyzes the condensation of ATP and 5-phosphoribose 1-diphosphate to form N'-(5'-phosphoribosyl)-ATP (PR-ATP). Has a crucial role in the pathway because the rate of histidine biosynthesis seems to be controlled primarily by regulation of HisG enzymatic activity.</text>
</comment>
<comment type="catalytic activity">
    <reaction evidence="1">
        <text>1-(5-phospho-beta-D-ribosyl)-ATP + diphosphate = 5-phospho-alpha-D-ribose 1-diphosphate + ATP</text>
        <dbReference type="Rhea" id="RHEA:18473"/>
        <dbReference type="ChEBI" id="CHEBI:30616"/>
        <dbReference type="ChEBI" id="CHEBI:33019"/>
        <dbReference type="ChEBI" id="CHEBI:58017"/>
        <dbReference type="ChEBI" id="CHEBI:73183"/>
        <dbReference type="EC" id="2.4.2.17"/>
    </reaction>
</comment>
<comment type="cofactor">
    <cofactor evidence="1">
        <name>Mg(2+)</name>
        <dbReference type="ChEBI" id="CHEBI:18420"/>
    </cofactor>
</comment>
<comment type="activity regulation">
    <text evidence="1">Feedback inhibited by histidine.</text>
</comment>
<comment type="pathway">
    <text evidence="1">Amino-acid biosynthesis; L-histidine biosynthesis; L-histidine from 5-phospho-alpha-D-ribose 1-diphosphate: step 1/9.</text>
</comment>
<comment type="subunit">
    <text evidence="1">Equilibrium between an active dimeric form, an inactive hexameric form and higher aggregates. Interconversion between the various forms is largely reversible and is influenced by the natural substrates and inhibitors of the enzyme.</text>
</comment>
<comment type="subcellular location">
    <subcellularLocation>
        <location evidence="1">Cytoplasm</location>
    </subcellularLocation>
</comment>
<comment type="similarity">
    <text evidence="1">Belongs to the ATP phosphoribosyltransferase family. Long subfamily.</text>
</comment>
<name>HIS1_YERPA</name>
<organism>
    <name type="scientific">Yersinia pestis bv. Antiqua (strain Antiqua)</name>
    <dbReference type="NCBI Taxonomy" id="360102"/>
    <lineage>
        <taxon>Bacteria</taxon>
        <taxon>Pseudomonadati</taxon>
        <taxon>Pseudomonadota</taxon>
        <taxon>Gammaproteobacteria</taxon>
        <taxon>Enterobacterales</taxon>
        <taxon>Yersiniaceae</taxon>
        <taxon>Yersinia</taxon>
    </lineage>
</organism>
<gene>
    <name evidence="1" type="primary">hisG</name>
    <name type="ordered locus">YPA_0845</name>
</gene>
<feature type="chain" id="PRO_1000004519" description="ATP phosphoribosyltransferase">
    <location>
        <begin position="1"/>
        <end position="299"/>
    </location>
</feature>